<reference key="1">
    <citation type="journal article" date="2000" name="Nature">
        <title>Complete genome sequence of Pseudomonas aeruginosa PAO1, an opportunistic pathogen.</title>
        <authorList>
            <person name="Stover C.K."/>
            <person name="Pham X.-Q.T."/>
            <person name="Erwin A.L."/>
            <person name="Mizoguchi S.D."/>
            <person name="Warrener P."/>
            <person name="Hickey M.J."/>
            <person name="Brinkman F.S.L."/>
            <person name="Hufnagle W.O."/>
            <person name="Kowalik D.J."/>
            <person name="Lagrou M."/>
            <person name="Garber R.L."/>
            <person name="Goltry L."/>
            <person name="Tolentino E."/>
            <person name="Westbrock-Wadman S."/>
            <person name="Yuan Y."/>
            <person name="Brody L.L."/>
            <person name="Coulter S.N."/>
            <person name="Folger K.R."/>
            <person name="Kas A."/>
            <person name="Larbig K."/>
            <person name="Lim R.M."/>
            <person name="Smith K.A."/>
            <person name="Spencer D.H."/>
            <person name="Wong G.K.-S."/>
            <person name="Wu Z."/>
            <person name="Paulsen I.T."/>
            <person name="Reizer J."/>
            <person name="Saier M.H. Jr."/>
            <person name="Hancock R.E.W."/>
            <person name="Lory S."/>
            <person name="Olson M.V."/>
        </authorList>
    </citation>
    <scope>NUCLEOTIDE SEQUENCE [LARGE SCALE GENOMIC DNA]</scope>
    <source>
        <strain>ATCC 15692 / DSM 22644 / CIP 104116 / JCM 14847 / LMG 12228 / 1C / PRS 101 / PAO1</strain>
    </source>
</reference>
<reference key="2">
    <citation type="journal article" date="1997" name="J. Bacteriol.">
        <title>Identification of greA encoding a transcriptional elongation factor as a member of the carA-orf-carB-greA operon in Pseudomonas aeruginosa PAO1.</title>
        <authorList>
            <person name="Lu C.-D."/>
            <person name="Kwon D.-H."/>
            <person name="Abdelal A.T."/>
        </authorList>
    </citation>
    <scope>NUCLEOTIDE SEQUENCE [GENOMIC DNA] OF 1-106</scope>
    <source>
        <strain>ATCC 15692 / DSM 22644 / CIP 104116 / JCM 14847 / LMG 12228 / 1C / PRS 101 / PAO1</strain>
    </source>
</reference>
<feature type="chain" id="PRO_0000155520" description="Ribosomal RNA large subunit methyltransferase E">
    <location>
        <begin position="1"/>
        <end position="207"/>
    </location>
</feature>
<feature type="active site" description="Proton acceptor" evidence="1">
    <location>
        <position position="161"/>
    </location>
</feature>
<feature type="binding site" evidence="1">
    <location>
        <position position="60"/>
    </location>
    <ligand>
        <name>S-adenosyl-L-methionine</name>
        <dbReference type="ChEBI" id="CHEBI:59789"/>
    </ligand>
</feature>
<feature type="binding site" evidence="1">
    <location>
        <position position="62"/>
    </location>
    <ligand>
        <name>S-adenosyl-L-methionine</name>
        <dbReference type="ChEBI" id="CHEBI:59789"/>
    </ligand>
</feature>
<feature type="binding site" evidence="1">
    <location>
        <position position="80"/>
    </location>
    <ligand>
        <name>S-adenosyl-L-methionine</name>
        <dbReference type="ChEBI" id="CHEBI:59789"/>
    </ligand>
</feature>
<feature type="binding site" evidence="1">
    <location>
        <position position="96"/>
    </location>
    <ligand>
        <name>S-adenosyl-L-methionine</name>
        <dbReference type="ChEBI" id="CHEBI:59789"/>
    </ligand>
</feature>
<feature type="binding site" evidence="1">
    <location>
        <position position="121"/>
    </location>
    <ligand>
        <name>S-adenosyl-L-methionine</name>
        <dbReference type="ChEBI" id="CHEBI:59789"/>
    </ligand>
</feature>
<feature type="sequence conflict" description="In Ref. 2; AAB39254." evidence="2" ref="2">
    <original>G</original>
    <variation>A</variation>
    <location>
        <position position="27"/>
    </location>
</feature>
<feature type="sequence conflict" description="In Ref. 2; AAB39254." evidence="2" ref="2">
    <original>A</original>
    <variation>G</variation>
    <location>
        <position position="58"/>
    </location>
</feature>
<accession>P95454</accession>
<sequence length="207" mass="23499">MARSKTSQRWLKEHFDDPYVKMAQRDGYRSRASYKLLEIQEKDRILRPGMTVVDLGAAPGGWSQVTSRVIGDRGRLIASDILEMDSIPDVTFIQGDFTEDAVFARILEAIGDHPVDLVISDMAPNMSGVRAADQPRAMYLCELALDLAGRVLRPGGDFLIKIFQGEGFDQYHKQAREMFDKVQMRKPLSSRDRSREQYLLARGFRGE</sequence>
<name>RLME_PSEAE</name>
<comment type="function">
    <text evidence="1">Specifically methylates the uridine in position 2552 of 23S rRNA at the 2'-O position of the ribose in the fully assembled 50S ribosomal subunit.</text>
</comment>
<comment type="catalytic activity">
    <reaction evidence="1">
        <text>uridine(2552) in 23S rRNA + S-adenosyl-L-methionine = 2'-O-methyluridine(2552) in 23S rRNA + S-adenosyl-L-homocysteine + H(+)</text>
        <dbReference type="Rhea" id="RHEA:42720"/>
        <dbReference type="Rhea" id="RHEA-COMP:10202"/>
        <dbReference type="Rhea" id="RHEA-COMP:10203"/>
        <dbReference type="ChEBI" id="CHEBI:15378"/>
        <dbReference type="ChEBI" id="CHEBI:57856"/>
        <dbReference type="ChEBI" id="CHEBI:59789"/>
        <dbReference type="ChEBI" id="CHEBI:65315"/>
        <dbReference type="ChEBI" id="CHEBI:74478"/>
        <dbReference type="EC" id="2.1.1.166"/>
    </reaction>
</comment>
<comment type="subcellular location">
    <subcellularLocation>
        <location evidence="1">Cytoplasm</location>
    </subcellularLocation>
</comment>
<comment type="similarity">
    <text evidence="1">Belongs to the class I-like SAM-binding methyltransferase superfamily. RNA methyltransferase RlmE family.</text>
</comment>
<dbReference type="EC" id="2.1.1.166" evidence="1"/>
<dbReference type="EMBL" id="AE004091">
    <property type="protein sequence ID" value="AAG08138.1"/>
    <property type="molecule type" value="Genomic_DNA"/>
</dbReference>
<dbReference type="EMBL" id="U81259">
    <property type="protein sequence ID" value="AAB39254.1"/>
    <property type="molecule type" value="Genomic_DNA"/>
</dbReference>
<dbReference type="PIR" id="A83051">
    <property type="entry name" value="A83051"/>
</dbReference>
<dbReference type="RefSeq" id="NP_253440.1">
    <property type="nucleotide sequence ID" value="NC_002516.2"/>
</dbReference>
<dbReference type="RefSeq" id="WP_003095202.1">
    <property type="nucleotide sequence ID" value="NZ_QZGE01000018.1"/>
</dbReference>
<dbReference type="SMR" id="P95454"/>
<dbReference type="FunCoup" id="P95454">
    <property type="interactions" value="572"/>
</dbReference>
<dbReference type="STRING" id="208964.PA4752"/>
<dbReference type="PaxDb" id="208964-PA4752"/>
<dbReference type="GeneID" id="881725"/>
<dbReference type="KEGG" id="pae:PA4752"/>
<dbReference type="PATRIC" id="fig|208964.12.peg.4978"/>
<dbReference type="PseudoCAP" id="PA4752"/>
<dbReference type="HOGENOM" id="CLU_009422_4_0_6"/>
<dbReference type="InParanoid" id="P95454"/>
<dbReference type="OrthoDB" id="9790080at2"/>
<dbReference type="PhylomeDB" id="P95454"/>
<dbReference type="BioCyc" id="PAER208964:G1FZ6-4864-MONOMER"/>
<dbReference type="Proteomes" id="UP000002438">
    <property type="component" value="Chromosome"/>
</dbReference>
<dbReference type="GO" id="GO:0005737">
    <property type="term" value="C:cytoplasm"/>
    <property type="evidence" value="ECO:0007669"/>
    <property type="project" value="UniProtKB-SubCell"/>
</dbReference>
<dbReference type="GO" id="GO:0008650">
    <property type="term" value="F:rRNA (uridine-2'-O-)-methyltransferase activity"/>
    <property type="evidence" value="ECO:0000318"/>
    <property type="project" value="GO_Central"/>
</dbReference>
<dbReference type="GO" id="GO:0001510">
    <property type="term" value="P:RNA methylation"/>
    <property type="evidence" value="ECO:0000318"/>
    <property type="project" value="GO_Central"/>
</dbReference>
<dbReference type="FunFam" id="3.40.50.150:FF:000005">
    <property type="entry name" value="Ribosomal RNA large subunit methyltransferase E"/>
    <property type="match status" value="1"/>
</dbReference>
<dbReference type="Gene3D" id="3.40.50.150">
    <property type="entry name" value="Vaccinia Virus protein VP39"/>
    <property type="match status" value="1"/>
</dbReference>
<dbReference type="HAMAP" id="MF_01547">
    <property type="entry name" value="RNA_methyltr_E"/>
    <property type="match status" value="1"/>
</dbReference>
<dbReference type="InterPro" id="IPR050082">
    <property type="entry name" value="RNA_methyltr_RlmE"/>
</dbReference>
<dbReference type="InterPro" id="IPR002877">
    <property type="entry name" value="RNA_MeTrfase_FtsJ_dom"/>
</dbReference>
<dbReference type="InterPro" id="IPR015507">
    <property type="entry name" value="rRNA-MeTfrase_E"/>
</dbReference>
<dbReference type="InterPro" id="IPR029063">
    <property type="entry name" value="SAM-dependent_MTases_sf"/>
</dbReference>
<dbReference type="NCBIfam" id="NF008390">
    <property type="entry name" value="PRK11188.1"/>
    <property type="match status" value="1"/>
</dbReference>
<dbReference type="PANTHER" id="PTHR10920">
    <property type="entry name" value="RIBOSOMAL RNA METHYLTRANSFERASE"/>
    <property type="match status" value="1"/>
</dbReference>
<dbReference type="PANTHER" id="PTHR10920:SF18">
    <property type="entry name" value="RRNA METHYLTRANSFERASE 2, MITOCHONDRIAL"/>
    <property type="match status" value="1"/>
</dbReference>
<dbReference type="Pfam" id="PF01728">
    <property type="entry name" value="FtsJ"/>
    <property type="match status" value="1"/>
</dbReference>
<dbReference type="PIRSF" id="PIRSF005461">
    <property type="entry name" value="23S_rRNA_mtase"/>
    <property type="match status" value="1"/>
</dbReference>
<dbReference type="SUPFAM" id="SSF53335">
    <property type="entry name" value="S-adenosyl-L-methionine-dependent methyltransferases"/>
    <property type="match status" value="1"/>
</dbReference>
<protein>
    <recommendedName>
        <fullName evidence="1">Ribosomal RNA large subunit methyltransferase E</fullName>
        <ecNumber evidence="1">2.1.1.166</ecNumber>
    </recommendedName>
    <alternativeName>
        <fullName evidence="1">23S rRNA Um2552 methyltransferase</fullName>
    </alternativeName>
    <alternativeName>
        <fullName evidence="1">rRNA (uridine-2'-O-)-methyltransferase</fullName>
    </alternativeName>
</protein>
<gene>
    <name evidence="1" type="primary">rlmE</name>
    <name evidence="1" type="synonym">ftsJ</name>
    <name evidence="1" type="synonym">rrmJ</name>
    <name type="ordered locus">PA4752</name>
</gene>
<organism>
    <name type="scientific">Pseudomonas aeruginosa (strain ATCC 15692 / DSM 22644 / CIP 104116 / JCM 14847 / LMG 12228 / 1C / PRS 101 / PAO1)</name>
    <dbReference type="NCBI Taxonomy" id="208964"/>
    <lineage>
        <taxon>Bacteria</taxon>
        <taxon>Pseudomonadati</taxon>
        <taxon>Pseudomonadota</taxon>
        <taxon>Gammaproteobacteria</taxon>
        <taxon>Pseudomonadales</taxon>
        <taxon>Pseudomonadaceae</taxon>
        <taxon>Pseudomonas</taxon>
    </lineage>
</organism>
<proteinExistence type="inferred from homology"/>
<evidence type="ECO:0000255" key="1">
    <source>
        <dbReference type="HAMAP-Rule" id="MF_01547"/>
    </source>
</evidence>
<evidence type="ECO:0000305" key="2"/>
<keyword id="KW-0963">Cytoplasm</keyword>
<keyword id="KW-0489">Methyltransferase</keyword>
<keyword id="KW-1185">Reference proteome</keyword>
<keyword id="KW-0698">rRNA processing</keyword>
<keyword id="KW-0949">S-adenosyl-L-methionine</keyword>
<keyword id="KW-0808">Transferase</keyword>